<sequence length="185" mass="20021">MIEVRFHGRGGQGAVTAANILAEAAFLEGKYVQAFPFFGVERRGAPVTAFTRIDNKPIRIKTQIYEPDVVVVLDPSLLDAVDVTAGLKDEGIVIVNTEKSKEEVLEKLKKKPKKLAIVDATTIALEILGLPITNTAILGAVAKATGLVKIESIEEAIKDTFSGELGEKNARAAREAYEKTEVFEL</sequence>
<reference key="1">
    <citation type="journal article" date="1996" name="J. Bacteriol.">
        <title>Molecular and phylogenetic characterization of pyruvate and 2-ketoisovalerate ferredoxin oxidoreductases from Pyrococcus furiosus and pyruvate ferredoxin oxidoreductase from Thermotoga maritima.</title>
        <authorList>
            <person name="Kletzin A."/>
            <person name="Adams M.W.W."/>
        </authorList>
    </citation>
    <scope>NUCLEOTIDE SEQUENCE [GENOMIC DNA]</scope>
    <scope>PROTEIN SEQUENCE OF 1-28</scope>
    <source>
        <strain>ATCC 43587 / DSM 3638 / JCM 8422 / Vc1</strain>
    </source>
</reference>
<reference key="2">
    <citation type="journal article" date="1999" name="Genetics">
        <title>Divergence of the hyperthermophilic archaea Pyrococcus furiosus and P. horikoshii inferred from complete genomic sequences.</title>
        <authorList>
            <person name="Maeder D.L."/>
            <person name="Weiss R.B."/>
            <person name="Dunn D.M."/>
            <person name="Cherry J.L."/>
            <person name="Gonzalez J.M."/>
            <person name="DiRuggiero J."/>
            <person name="Robb F.T."/>
        </authorList>
    </citation>
    <scope>NUCLEOTIDE SEQUENCE [LARGE SCALE GENOMIC DNA]</scope>
    <source>
        <strain>ATCC 43587 / DSM 3638 / JCM 8422 / Vc1</strain>
    </source>
</reference>
<reference key="3">
    <citation type="journal article" date="1993" name="Biochim. Biophys. Acta">
        <title>Purification and characterization of pyruvate ferredoxin oxidoreductase from the hyperthermophilic archaeon Pyrococcus furiosus.</title>
        <authorList>
            <person name="Blamey J.M."/>
            <person name="Adams M.W.W."/>
        </authorList>
    </citation>
    <scope>CHARACTERIZATION</scope>
    <source>
        <strain>ATCC 43587 / DSM 3638 / JCM 8422 / Vc1</strain>
    </source>
</reference>
<protein>
    <recommendedName>
        <fullName>Pyruvate/ketoisovalerate oxidoreductases common subunit gamma</fullName>
    </recommendedName>
    <domain>
        <recommendedName>
            <fullName>Pyruvate synthase subunit PorC</fullName>
            <ecNumber>1.2.7.1</ecNumber>
        </recommendedName>
        <alternativeName>
            <fullName>Pyruvate oxidoreductase gamma chain</fullName>
            <shortName>POR</shortName>
        </alternativeName>
        <alternativeName>
            <fullName>Pyruvic-ferredoxin oxidoreductase subunit gamma</fullName>
        </alternativeName>
    </domain>
    <domain>
        <recommendedName>
            <fullName>Ketoisovalerate oxidoreductase subunit VorC</fullName>
            <shortName>VOR</shortName>
            <ecNumber>1.2.7.7</ecNumber>
        </recommendedName>
        <alternativeName>
            <fullName>2-oxoisovalerate ferredoxin reductase subunit gamma</fullName>
        </alternativeName>
        <alternativeName>
            <fullName>2-oxoisovalerate oxidoreductase gamma chain</fullName>
        </alternativeName>
    </domain>
</protein>
<feature type="chain" id="PRO_0000099914" description="Pyruvate/ketoisovalerate oxidoreductases common subunit gamma">
    <location>
        <begin position="1"/>
        <end position="185"/>
    </location>
</feature>
<gene>
    <name type="primary">porG</name>
    <name type="ordered locus">PF0971</name>
</gene>
<keyword id="KW-0903">Direct protein sequencing</keyword>
<keyword id="KW-0560">Oxidoreductase</keyword>
<keyword id="KW-1185">Reference proteome</keyword>
<name>PORC_PYRFU</name>
<proteinExistence type="evidence at protein level"/>
<organism>
    <name type="scientific">Pyrococcus furiosus (strain ATCC 43587 / DSM 3638 / JCM 8422 / Vc1)</name>
    <dbReference type="NCBI Taxonomy" id="186497"/>
    <lineage>
        <taxon>Archaea</taxon>
        <taxon>Methanobacteriati</taxon>
        <taxon>Methanobacteriota</taxon>
        <taxon>Thermococci</taxon>
        <taxon>Thermococcales</taxon>
        <taxon>Thermococcaceae</taxon>
        <taxon>Pyrococcus</taxon>
    </lineage>
</organism>
<accession>Q51799</accession>
<comment type="catalytic activity">
    <reaction>
        <text>2 oxidized [2Fe-2S]-[ferredoxin] + pyruvate + CoA = 2 reduced [2Fe-2S]-[ferredoxin] + acetyl-CoA + CO2 + H(+)</text>
        <dbReference type="Rhea" id="RHEA:12765"/>
        <dbReference type="Rhea" id="RHEA-COMP:10000"/>
        <dbReference type="Rhea" id="RHEA-COMP:10001"/>
        <dbReference type="ChEBI" id="CHEBI:15361"/>
        <dbReference type="ChEBI" id="CHEBI:15378"/>
        <dbReference type="ChEBI" id="CHEBI:16526"/>
        <dbReference type="ChEBI" id="CHEBI:33737"/>
        <dbReference type="ChEBI" id="CHEBI:33738"/>
        <dbReference type="ChEBI" id="CHEBI:57287"/>
        <dbReference type="ChEBI" id="CHEBI:57288"/>
        <dbReference type="EC" id="1.2.7.1"/>
    </reaction>
</comment>
<comment type="catalytic activity">
    <reaction>
        <text>3-methyl-2-oxobutanoate + 2 oxidized [2Fe-2S]-[ferredoxin] + CoA = 2-methylpropanoyl-CoA + 2 reduced [2Fe-2S]-[ferredoxin] + CO2 + H(+)</text>
        <dbReference type="Rhea" id="RHEA:11712"/>
        <dbReference type="Rhea" id="RHEA-COMP:10000"/>
        <dbReference type="Rhea" id="RHEA-COMP:10001"/>
        <dbReference type="ChEBI" id="CHEBI:11851"/>
        <dbReference type="ChEBI" id="CHEBI:15378"/>
        <dbReference type="ChEBI" id="CHEBI:16526"/>
        <dbReference type="ChEBI" id="CHEBI:33737"/>
        <dbReference type="ChEBI" id="CHEBI:33738"/>
        <dbReference type="ChEBI" id="CHEBI:57287"/>
        <dbReference type="ChEBI" id="CHEBI:57338"/>
        <dbReference type="EC" id="1.2.7.7"/>
    </reaction>
</comment>
<comment type="subunit">
    <text>Heterotetramer of one alpha, one beta, one delta and one gamma chain.</text>
</comment>
<dbReference type="EC" id="1.2.7.1"/>
<dbReference type="EC" id="1.2.7.7"/>
<dbReference type="EMBL" id="X85250">
    <property type="protein sequence ID" value="CAA59500.1"/>
    <property type="molecule type" value="Genomic_DNA"/>
</dbReference>
<dbReference type="EMBL" id="AE009950">
    <property type="protein sequence ID" value="AAL81095.1"/>
    <property type="molecule type" value="Genomic_DNA"/>
</dbReference>
<dbReference type="PIR" id="T45083">
    <property type="entry name" value="T45083"/>
</dbReference>
<dbReference type="RefSeq" id="WP_011012108.1">
    <property type="nucleotide sequence ID" value="NZ_CP023154.1"/>
</dbReference>
<dbReference type="SMR" id="Q51799"/>
<dbReference type="STRING" id="186497.PF0971"/>
<dbReference type="PaxDb" id="186497-PF0971"/>
<dbReference type="KEGG" id="pfu:PF0971"/>
<dbReference type="PATRIC" id="fig|186497.12.peg.1030"/>
<dbReference type="eggNOG" id="arCOG01603">
    <property type="taxonomic scope" value="Archaea"/>
</dbReference>
<dbReference type="HOGENOM" id="CLU_087284_2_0_2"/>
<dbReference type="OrthoDB" id="372091at2157"/>
<dbReference type="PhylomeDB" id="Q51799"/>
<dbReference type="BRENDA" id="1.2.7.1">
    <property type="organism ID" value="5243"/>
</dbReference>
<dbReference type="Proteomes" id="UP000001013">
    <property type="component" value="Chromosome"/>
</dbReference>
<dbReference type="GO" id="GO:0043807">
    <property type="term" value="F:3-methyl-2-oxobutanoate dehydrogenase (ferredoxin) activity"/>
    <property type="evidence" value="ECO:0007669"/>
    <property type="project" value="UniProtKB-EC"/>
</dbReference>
<dbReference type="GO" id="GO:0019164">
    <property type="term" value="F:pyruvate synthase activity"/>
    <property type="evidence" value="ECO:0007669"/>
    <property type="project" value="UniProtKB-EC"/>
</dbReference>
<dbReference type="Gene3D" id="3.40.920.10">
    <property type="entry name" value="Pyruvate-ferredoxin oxidoreductase, PFOR, domain III"/>
    <property type="match status" value="1"/>
</dbReference>
<dbReference type="InterPro" id="IPR051626">
    <property type="entry name" value="Oxidoreductase_gamma_subunit"/>
</dbReference>
<dbReference type="InterPro" id="IPR011894">
    <property type="entry name" value="PorC_KorC"/>
</dbReference>
<dbReference type="InterPro" id="IPR019752">
    <property type="entry name" value="Pyrv/ketoisovalerate_OxRed_cat"/>
</dbReference>
<dbReference type="InterPro" id="IPR002869">
    <property type="entry name" value="Pyrv_flavodox_OxRed_cen"/>
</dbReference>
<dbReference type="NCBIfam" id="TIGR02175">
    <property type="entry name" value="PorC_KorC"/>
    <property type="match status" value="1"/>
</dbReference>
<dbReference type="NCBIfam" id="NF006321">
    <property type="entry name" value="PRK08534.1"/>
    <property type="match status" value="1"/>
</dbReference>
<dbReference type="NCBIfam" id="NF010632">
    <property type="entry name" value="PRK14029.1"/>
    <property type="match status" value="1"/>
</dbReference>
<dbReference type="PANTHER" id="PTHR43366">
    <property type="entry name" value="PYRUVATE SYNTHASE SUBUNIT PORC"/>
    <property type="match status" value="1"/>
</dbReference>
<dbReference type="PANTHER" id="PTHR43366:SF1">
    <property type="entry name" value="PYRUVATE SYNTHASE SUBUNIT PORC"/>
    <property type="match status" value="1"/>
</dbReference>
<dbReference type="Pfam" id="PF01558">
    <property type="entry name" value="POR"/>
    <property type="match status" value="1"/>
</dbReference>
<dbReference type="SUPFAM" id="SSF53323">
    <property type="entry name" value="Pyruvate-ferredoxin oxidoreductase, PFOR, domain III"/>
    <property type="match status" value="1"/>
</dbReference>